<sequence>MKAVIFIMDGLGDRPNKDGNTPLKEAKTPVMDKMAKDGICGLMNAVDVGVRPGSDTAHLAILGYDPYTTYTGRGPFEACGVGVTVKPGDIAFRCNFSSVNENFIVTDRRAGRIEDTSELEKELDGLKIDDIDIIFKESGGYRAALVLRGPGLSDKISDADPKKEGKRVKEIHPLDNSKEAKKTAEIVNKLLKIAYEKLDKHPVNEERRKQNLPVANMIVPRGVGQVPEIMQFSEKTGLKGACIAGTGLIKGIAKMVGLDVIDVEGCDGTPNSDLMAKACAIVETLKDYDFILVNVKGADEAGHDGNYELKKEIIEKIDEMLDYITKNIDKDEVYIAMSGDHSTPIEEMDHSADPLPILIWGKSVRVDDVEKFDEFSTYKGGLNWIKGTNIMPILMDLMSIAKKYGA</sequence>
<reference key="1">
    <citation type="submission" date="2007-03" db="EMBL/GenBank/DDBJ databases">
        <title>Complete sequence of chromosome of Methanococcus maripaludis C5.</title>
        <authorList>
            <consortium name="US DOE Joint Genome Institute"/>
            <person name="Copeland A."/>
            <person name="Lucas S."/>
            <person name="Lapidus A."/>
            <person name="Barry K."/>
            <person name="Glavina del Rio T."/>
            <person name="Dalin E."/>
            <person name="Tice H."/>
            <person name="Pitluck S."/>
            <person name="Chertkov O."/>
            <person name="Brettin T."/>
            <person name="Bruce D."/>
            <person name="Han C."/>
            <person name="Detter J.C."/>
            <person name="Schmutz J."/>
            <person name="Larimer F."/>
            <person name="Land M."/>
            <person name="Hauser L."/>
            <person name="Kyrpides N."/>
            <person name="Mikhailova N."/>
            <person name="Sieprawska-Lupa M."/>
            <person name="Whitman W.B."/>
            <person name="Richardson P."/>
        </authorList>
    </citation>
    <scope>NUCLEOTIDE SEQUENCE [LARGE SCALE GENOMIC DNA]</scope>
    <source>
        <strain>C5 / ATCC BAA-1333</strain>
    </source>
</reference>
<proteinExistence type="inferred from homology"/>
<keyword id="KW-0324">Glycolysis</keyword>
<keyword id="KW-0413">Isomerase</keyword>
<protein>
    <recommendedName>
        <fullName evidence="1">2,3-bisphosphoglycerate-independent phosphoglycerate mutase</fullName>
        <shortName evidence="1">BPG-independent PGAM</shortName>
        <shortName evidence="1">Phosphoglyceromutase</shortName>
        <shortName evidence="1">aPGAM</shortName>
        <ecNumber evidence="1">5.4.2.12</ecNumber>
    </recommendedName>
</protein>
<organism>
    <name type="scientific">Methanococcus maripaludis (strain C5 / ATCC BAA-1333)</name>
    <dbReference type="NCBI Taxonomy" id="402880"/>
    <lineage>
        <taxon>Archaea</taxon>
        <taxon>Methanobacteriati</taxon>
        <taxon>Methanobacteriota</taxon>
        <taxon>Methanomada group</taxon>
        <taxon>Methanococci</taxon>
        <taxon>Methanococcales</taxon>
        <taxon>Methanococcaceae</taxon>
        <taxon>Methanococcus</taxon>
    </lineage>
</organism>
<dbReference type="EC" id="5.4.2.12" evidence="1"/>
<dbReference type="EMBL" id="CP000609">
    <property type="protein sequence ID" value="ABO34456.1"/>
    <property type="molecule type" value="Genomic_DNA"/>
</dbReference>
<dbReference type="RefSeq" id="WP_011867916.1">
    <property type="nucleotide sequence ID" value="NC_009135.1"/>
</dbReference>
<dbReference type="SMR" id="A4FW85"/>
<dbReference type="STRING" id="402880.MmarC5_0139"/>
<dbReference type="DNASU" id="4927786"/>
<dbReference type="GeneID" id="4927786"/>
<dbReference type="KEGG" id="mmq:MmarC5_0139"/>
<dbReference type="eggNOG" id="arCOG01696">
    <property type="taxonomic scope" value="Archaea"/>
</dbReference>
<dbReference type="HOGENOM" id="CLU_034906_2_0_2"/>
<dbReference type="OrthoDB" id="52918at2157"/>
<dbReference type="UniPathway" id="UPA00109">
    <property type="reaction ID" value="UER00186"/>
</dbReference>
<dbReference type="Proteomes" id="UP000000253">
    <property type="component" value="Chromosome"/>
</dbReference>
<dbReference type="GO" id="GO:0046872">
    <property type="term" value="F:metal ion binding"/>
    <property type="evidence" value="ECO:0007669"/>
    <property type="project" value="InterPro"/>
</dbReference>
<dbReference type="GO" id="GO:0004619">
    <property type="term" value="F:phosphoglycerate mutase activity"/>
    <property type="evidence" value="ECO:0007669"/>
    <property type="project" value="UniProtKB-EC"/>
</dbReference>
<dbReference type="GO" id="GO:0006096">
    <property type="term" value="P:glycolytic process"/>
    <property type="evidence" value="ECO:0007669"/>
    <property type="project" value="UniProtKB-UniRule"/>
</dbReference>
<dbReference type="CDD" id="cd16011">
    <property type="entry name" value="iPGM_like"/>
    <property type="match status" value="1"/>
</dbReference>
<dbReference type="Gene3D" id="3.40.720.10">
    <property type="entry name" value="Alkaline Phosphatase, subunit A"/>
    <property type="match status" value="2"/>
</dbReference>
<dbReference type="HAMAP" id="MF_01402_A">
    <property type="entry name" value="ApgM_A"/>
    <property type="match status" value="1"/>
</dbReference>
<dbReference type="InterPro" id="IPR017850">
    <property type="entry name" value="Alkaline_phosphatase_core_sf"/>
</dbReference>
<dbReference type="InterPro" id="IPR023665">
    <property type="entry name" value="ApgAM_prokaryotes"/>
</dbReference>
<dbReference type="InterPro" id="IPR006124">
    <property type="entry name" value="Metalloenzyme"/>
</dbReference>
<dbReference type="InterPro" id="IPR004456">
    <property type="entry name" value="Pglycerate_mutase_ApgM"/>
</dbReference>
<dbReference type="NCBIfam" id="TIGR00306">
    <property type="entry name" value="apgM"/>
    <property type="match status" value="1"/>
</dbReference>
<dbReference type="NCBIfam" id="NF003104">
    <property type="entry name" value="PRK04024.1"/>
    <property type="match status" value="1"/>
</dbReference>
<dbReference type="PANTHER" id="PTHR31209">
    <property type="entry name" value="COFACTOR-INDEPENDENT PHOSPHOGLYCERATE MUTASE"/>
    <property type="match status" value="1"/>
</dbReference>
<dbReference type="PANTHER" id="PTHR31209:SF0">
    <property type="entry name" value="METALLOENZYME DOMAIN-CONTAINING PROTEIN"/>
    <property type="match status" value="1"/>
</dbReference>
<dbReference type="Pfam" id="PF01676">
    <property type="entry name" value="Metalloenzyme"/>
    <property type="match status" value="1"/>
</dbReference>
<dbReference type="Pfam" id="PF10143">
    <property type="entry name" value="PhosphMutase"/>
    <property type="match status" value="1"/>
</dbReference>
<dbReference type="PIRSF" id="PIRSF006392">
    <property type="entry name" value="IPGAM_arch"/>
    <property type="match status" value="1"/>
</dbReference>
<dbReference type="SUPFAM" id="SSF53649">
    <property type="entry name" value="Alkaline phosphatase-like"/>
    <property type="match status" value="1"/>
</dbReference>
<feature type="chain" id="PRO_1000087363" description="2,3-bisphosphoglycerate-independent phosphoglycerate mutase">
    <location>
        <begin position="1"/>
        <end position="406"/>
    </location>
</feature>
<gene>
    <name evidence="1" type="primary">apgM</name>
    <name type="ordered locus">MmarC5_0139</name>
</gene>
<evidence type="ECO:0000255" key="1">
    <source>
        <dbReference type="HAMAP-Rule" id="MF_01402"/>
    </source>
</evidence>
<comment type="function">
    <text evidence="1">Catalyzes the interconversion of 2-phosphoglycerate and 3-phosphoglycerate.</text>
</comment>
<comment type="catalytic activity">
    <reaction evidence="1">
        <text>(2R)-2-phosphoglycerate = (2R)-3-phosphoglycerate</text>
        <dbReference type="Rhea" id="RHEA:15901"/>
        <dbReference type="ChEBI" id="CHEBI:58272"/>
        <dbReference type="ChEBI" id="CHEBI:58289"/>
        <dbReference type="EC" id="5.4.2.12"/>
    </reaction>
</comment>
<comment type="pathway">
    <text evidence="1">Carbohydrate degradation; glycolysis; pyruvate from D-glyceraldehyde 3-phosphate: step 3/5.</text>
</comment>
<comment type="similarity">
    <text evidence="1">Belongs to the BPG-independent phosphoglycerate mutase family. A-PGAM subfamily.</text>
</comment>
<name>APGM_METM5</name>
<accession>A4FW85</accession>